<evidence type="ECO:0000250" key="1">
    <source>
        <dbReference type="UniProtKB" id="P33201"/>
    </source>
</evidence>
<evidence type="ECO:0000305" key="2"/>
<proteinExistence type="inferred from homology"/>
<gene>
    <name evidence="1" type="primary">MRT4</name>
    <name type="ordered locus">ABR012C</name>
</gene>
<comment type="function">
    <text evidence="1">Component of the ribosome assembly machinery. Nuclear paralog of the ribosomal protein P0, it binds pre-60S subunits at an early stage of assembly in the nucleolus, and is replaced by P0 in cytoplasmic pre-60S subunits and mature 80S ribosomes.</text>
</comment>
<comment type="subunit">
    <text evidence="1">Associates with the pre-60S ribosomal particle.</text>
</comment>
<comment type="subcellular location">
    <subcellularLocation>
        <location evidence="1">Nucleus</location>
        <location evidence="1">Nucleolus</location>
    </subcellularLocation>
    <subcellularLocation>
        <location evidence="1">Cytoplasm</location>
    </subcellularLocation>
    <text evidence="1">Shuttles between the nucleus and the cytoplasm.</text>
</comment>
<comment type="similarity">
    <text evidence="2">Belongs to the universal ribosomal protein uL10 family.</text>
</comment>
<keyword id="KW-0963">Cytoplasm</keyword>
<keyword id="KW-0539">Nucleus</keyword>
<keyword id="KW-1185">Reference proteome</keyword>
<keyword id="KW-0690">Ribosome biogenesis</keyword>
<name>MRT4_EREGS</name>
<protein>
    <recommendedName>
        <fullName evidence="1">Ribosome assembly factor mrt4</fullName>
    </recommendedName>
    <alternativeName>
        <fullName evidence="1">mRNA turnover protein 4</fullName>
    </alternativeName>
</protein>
<accession>Q75DK9</accession>
<dbReference type="EMBL" id="AE016815">
    <property type="protein sequence ID" value="AAS50782.1"/>
    <property type="molecule type" value="Genomic_DNA"/>
</dbReference>
<dbReference type="RefSeq" id="NP_982958.1">
    <property type="nucleotide sequence ID" value="NM_208311.1"/>
</dbReference>
<dbReference type="SMR" id="Q75DK9"/>
<dbReference type="FunCoup" id="Q75DK9">
    <property type="interactions" value="1163"/>
</dbReference>
<dbReference type="STRING" id="284811.Q75DK9"/>
<dbReference type="EnsemblFungi" id="AAS50782">
    <property type="protein sequence ID" value="AAS50782"/>
    <property type="gene ID" value="AGOS_ABR012C"/>
</dbReference>
<dbReference type="GeneID" id="4619050"/>
<dbReference type="KEGG" id="ago:AGOS_ABR012C"/>
<dbReference type="eggNOG" id="KOG0816">
    <property type="taxonomic scope" value="Eukaryota"/>
</dbReference>
<dbReference type="HOGENOM" id="CLU_071690_0_0_1"/>
<dbReference type="InParanoid" id="Q75DK9"/>
<dbReference type="OMA" id="LEWAENY"/>
<dbReference type="OrthoDB" id="10262308at2759"/>
<dbReference type="Proteomes" id="UP000000591">
    <property type="component" value="Chromosome II"/>
</dbReference>
<dbReference type="GO" id="GO:0005737">
    <property type="term" value="C:cytoplasm"/>
    <property type="evidence" value="ECO:0007669"/>
    <property type="project" value="UniProtKB-SubCell"/>
</dbReference>
<dbReference type="GO" id="GO:0005730">
    <property type="term" value="C:nucleolus"/>
    <property type="evidence" value="ECO:0000318"/>
    <property type="project" value="GO_Central"/>
</dbReference>
<dbReference type="GO" id="GO:0005654">
    <property type="term" value="C:nucleoplasm"/>
    <property type="evidence" value="ECO:0007669"/>
    <property type="project" value="EnsemblFungi"/>
</dbReference>
<dbReference type="GO" id="GO:0030687">
    <property type="term" value="C:preribosome, large subunit precursor"/>
    <property type="evidence" value="ECO:0000318"/>
    <property type="project" value="GO_Central"/>
</dbReference>
<dbReference type="GO" id="GO:0032040">
    <property type="term" value="C:small-subunit processome"/>
    <property type="evidence" value="ECO:0007669"/>
    <property type="project" value="EnsemblFungi"/>
</dbReference>
<dbReference type="GO" id="GO:0000956">
    <property type="term" value="P:nuclear-transcribed mRNA catabolic process"/>
    <property type="evidence" value="ECO:0000318"/>
    <property type="project" value="GO_Central"/>
</dbReference>
<dbReference type="GO" id="GO:0000027">
    <property type="term" value="P:ribosomal large subunit assembly"/>
    <property type="evidence" value="ECO:0007669"/>
    <property type="project" value="InterPro"/>
</dbReference>
<dbReference type="GO" id="GO:0042273">
    <property type="term" value="P:ribosomal large subunit biogenesis"/>
    <property type="evidence" value="ECO:0000318"/>
    <property type="project" value="GO_Central"/>
</dbReference>
<dbReference type="GO" id="GO:0000055">
    <property type="term" value="P:ribosomal large subunit export from nucleus"/>
    <property type="evidence" value="ECO:0007669"/>
    <property type="project" value="EnsemblFungi"/>
</dbReference>
<dbReference type="GO" id="GO:0006364">
    <property type="term" value="P:rRNA processing"/>
    <property type="evidence" value="ECO:0000318"/>
    <property type="project" value="GO_Central"/>
</dbReference>
<dbReference type="CDD" id="cd05796">
    <property type="entry name" value="Ribosomal_P0_like"/>
    <property type="match status" value="1"/>
</dbReference>
<dbReference type="FunFam" id="3.30.70.1730:FF:000005">
    <property type="entry name" value="Ribosome assembly factor mrt4"/>
    <property type="match status" value="1"/>
</dbReference>
<dbReference type="FunFam" id="3.90.105.20:FF:000003">
    <property type="entry name" value="Ribosome assembly factor mrt4"/>
    <property type="match status" value="1"/>
</dbReference>
<dbReference type="Gene3D" id="3.30.70.1730">
    <property type="match status" value="1"/>
</dbReference>
<dbReference type="Gene3D" id="3.90.105.20">
    <property type="match status" value="1"/>
</dbReference>
<dbReference type="InterPro" id="IPR033867">
    <property type="entry name" value="Mrt4"/>
</dbReference>
<dbReference type="InterPro" id="IPR001790">
    <property type="entry name" value="Ribosomal_uL10"/>
</dbReference>
<dbReference type="InterPro" id="IPR040637">
    <property type="entry name" value="Ribosomal_uL10-like_insert"/>
</dbReference>
<dbReference type="InterPro" id="IPR043164">
    <property type="entry name" value="Ribosomal_uL10-like_insert_sf"/>
</dbReference>
<dbReference type="InterPro" id="IPR043141">
    <property type="entry name" value="Ribosomal_uL10-like_sf"/>
</dbReference>
<dbReference type="InterPro" id="IPR051742">
    <property type="entry name" value="Ribosome_Assembly_uL10"/>
</dbReference>
<dbReference type="PANTHER" id="PTHR45841:SF1">
    <property type="entry name" value="MRNA TURNOVER PROTEIN 4 HOMOLOG"/>
    <property type="match status" value="1"/>
</dbReference>
<dbReference type="PANTHER" id="PTHR45841">
    <property type="entry name" value="MRNA TURNOVER PROTEIN 4 MRTO4"/>
    <property type="match status" value="1"/>
</dbReference>
<dbReference type="Pfam" id="PF00466">
    <property type="entry name" value="Ribosomal_L10"/>
    <property type="match status" value="1"/>
</dbReference>
<dbReference type="Pfam" id="PF17777">
    <property type="entry name" value="RL10P_insert"/>
    <property type="match status" value="1"/>
</dbReference>
<dbReference type="SUPFAM" id="SSF160369">
    <property type="entry name" value="Ribosomal protein L10-like"/>
    <property type="match status" value="1"/>
</dbReference>
<organism>
    <name type="scientific">Eremothecium gossypii (strain ATCC 10895 / CBS 109.51 / FGSC 9923 / NRRL Y-1056)</name>
    <name type="common">Yeast</name>
    <name type="synonym">Ashbya gossypii</name>
    <dbReference type="NCBI Taxonomy" id="284811"/>
    <lineage>
        <taxon>Eukaryota</taxon>
        <taxon>Fungi</taxon>
        <taxon>Dikarya</taxon>
        <taxon>Ascomycota</taxon>
        <taxon>Saccharomycotina</taxon>
        <taxon>Saccharomycetes</taxon>
        <taxon>Saccharomycetales</taxon>
        <taxon>Saccharomycetaceae</taxon>
        <taxon>Eremothecium</taxon>
    </lineage>
</organism>
<reference key="1">
    <citation type="journal article" date="2004" name="Science">
        <title>The Ashbya gossypii genome as a tool for mapping the ancient Saccharomyces cerevisiae genome.</title>
        <authorList>
            <person name="Dietrich F.S."/>
            <person name="Voegeli S."/>
            <person name="Brachat S."/>
            <person name="Lerch A."/>
            <person name="Gates K."/>
            <person name="Steiner S."/>
            <person name="Mohr C."/>
            <person name="Poehlmann R."/>
            <person name="Luedi P."/>
            <person name="Choi S."/>
            <person name="Wing R.A."/>
            <person name="Flavier A."/>
            <person name="Gaffney T.D."/>
            <person name="Philippsen P."/>
        </authorList>
    </citation>
    <scope>NUCLEOTIDE SEQUENCE [LARGE SCALE GENOMIC DNA]</scope>
    <source>
        <strain>ATCC 10895 / CBS 109.51 / FGSC 9923 / NRRL Y-1056</strain>
    </source>
</reference>
<reference key="2">
    <citation type="journal article" date="2013" name="G3 (Bethesda)">
        <title>Genomes of Ashbya fungi isolated from insects reveal four mating-type loci, numerous translocations, lack of transposons, and distinct gene duplications.</title>
        <authorList>
            <person name="Dietrich F.S."/>
            <person name="Voegeli S."/>
            <person name="Kuo S."/>
            <person name="Philippsen P."/>
        </authorList>
    </citation>
    <scope>GENOME REANNOTATION</scope>
    <source>
        <strain>ATCC 10895 / CBS 109.51 / FGSC 9923 / NRRL Y-1056</strain>
    </source>
</reference>
<feature type="chain" id="PRO_0000154811" description="Ribosome assembly factor mrt4">
    <location>
        <begin position="1"/>
        <end position="236"/>
    </location>
</feature>
<sequence length="236" mass="26879">MPRSKRSKLVTLAQTEKKGRENKERIFDEVRQALDTYRYVWVLRLEDVRTPVLQEIRSAWAGSKLIMGRRKVLEKALGGTRETEYKENVSGLVKQCEGMCGLLFTDETPETVTAYFREYRKADYSRAKSRAPLRVEIPAGVVYSRGGQVPAEDDVPMVHSLEPTLRNKFKMPTRIQNGKITLEQPYLVCEAGETLDVRQALILKQFGVAAAEFRVKLAAYYDGEAAAVEEVRINME</sequence>